<accession>Q5AL63</accession>
<accession>A0A1D8PFJ2</accession>
<dbReference type="EMBL" id="CP017623">
    <property type="protein sequence ID" value="AOW26899.1"/>
    <property type="molecule type" value="Genomic_DNA"/>
</dbReference>
<dbReference type="RefSeq" id="XP_722125.1">
    <property type="nucleotide sequence ID" value="XM_717032.1"/>
</dbReference>
<dbReference type="SMR" id="Q5AL63"/>
<dbReference type="STRING" id="237561.Q5AL63"/>
<dbReference type="EnsemblFungi" id="C1_12840W_A-T">
    <property type="protein sequence ID" value="C1_12840W_A-T-p1"/>
    <property type="gene ID" value="C1_12840W_A"/>
</dbReference>
<dbReference type="GeneID" id="3636177"/>
<dbReference type="KEGG" id="cal:CAALFM_C112840WA"/>
<dbReference type="CGD" id="CAL0000187076">
    <property type="gene designation" value="orf19.12380"/>
</dbReference>
<dbReference type="VEuPathDB" id="FungiDB:C1_12840W_A"/>
<dbReference type="eggNOG" id="ENOG502S7WI">
    <property type="taxonomic scope" value="Eukaryota"/>
</dbReference>
<dbReference type="HOGENOM" id="CLU_100369_3_1_1"/>
<dbReference type="InParanoid" id="Q5AL63"/>
<dbReference type="OrthoDB" id="1872155at2759"/>
<dbReference type="PRO" id="PR:Q5AL63"/>
<dbReference type="Proteomes" id="UP000000559">
    <property type="component" value="Chromosome 1"/>
</dbReference>
<dbReference type="GO" id="GO:0071821">
    <property type="term" value="C:FANCM-MHF complex"/>
    <property type="evidence" value="ECO:0000318"/>
    <property type="project" value="GO_Central"/>
</dbReference>
<dbReference type="GO" id="GO:0003682">
    <property type="term" value="F:chromatin binding"/>
    <property type="evidence" value="ECO:0000318"/>
    <property type="project" value="GO_Central"/>
</dbReference>
<dbReference type="GO" id="GO:0003677">
    <property type="term" value="F:DNA binding"/>
    <property type="evidence" value="ECO:0007669"/>
    <property type="project" value="UniProtKB-KW"/>
</dbReference>
<dbReference type="GO" id="GO:0046982">
    <property type="term" value="F:protein heterodimerization activity"/>
    <property type="evidence" value="ECO:0007669"/>
    <property type="project" value="InterPro"/>
</dbReference>
<dbReference type="GO" id="GO:0006281">
    <property type="term" value="P:DNA repair"/>
    <property type="evidence" value="ECO:0007669"/>
    <property type="project" value="UniProtKB-KW"/>
</dbReference>
<dbReference type="GO" id="GO:0031297">
    <property type="term" value="P:replication fork processing"/>
    <property type="evidence" value="ECO:0000318"/>
    <property type="project" value="GO_Central"/>
</dbReference>
<dbReference type="GO" id="GO:0000712">
    <property type="term" value="P:resolution of meiotic recombination intermediates"/>
    <property type="evidence" value="ECO:0000318"/>
    <property type="project" value="GO_Central"/>
</dbReference>
<dbReference type="CDD" id="cd22919">
    <property type="entry name" value="HFD_CENP-S"/>
    <property type="match status" value="1"/>
</dbReference>
<dbReference type="Gene3D" id="1.10.20.10">
    <property type="entry name" value="Histone, subunit A"/>
    <property type="match status" value="1"/>
</dbReference>
<dbReference type="InterPro" id="IPR029003">
    <property type="entry name" value="CENP-S/Mhf1"/>
</dbReference>
<dbReference type="InterPro" id="IPR009072">
    <property type="entry name" value="Histone-fold"/>
</dbReference>
<dbReference type="PANTHER" id="PTHR22980:SF0">
    <property type="entry name" value="CENTROMERE PROTEIN S"/>
    <property type="match status" value="1"/>
</dbReference>
<dbReference type="PANTHER" id="PTHR22980">
    <property type="entry name" value="CORTISTATIN"/>
    <property type="match status" value="1"/>
</dbReference>
<dbReference type="Pfam" id="PF15630">
    <property type="entry name" value="CENP-S"/>
    <property type="match status" value="1"/>
</dbReference>
<dbReference type="SUPFAM" id="SSF47113">
    <property type="entry name" value="Histone-fold"/>
    <property type="match status" value="1"/>
</dbReference>
<evidence type="ECO:0000250" key="1">
    <source>
        <dbReference type="UniProtKB" id="O74896"/>
    </source>
</evidence>
<evidence type="ECO:0000250" key="2">
    <source>
        <dbReference type="UniProtKB" id="Q3E835"/>
    </source>
</evidence>
<evidence type="ECO:0000305" key="3"/>
<protein>
    <recommendedName>
        <fullName>Inner kinetochore subunit MHF1</fullName>
    </recommendedName>
    <alternativeName>
        <fullName>CENP-S homolog</fullName>
    </alternativeName>
    <alternativeName>
        <fullName>Constitutive centromere-associated network protein MHF1</fullName>
    </alternativeName>
    <alternativeName>
        <fullName evidence="2">MHF histone-fold complex subunit 1</fullName>
    </alternativeName>
</protein>
<organism>
    <name type="scientific">Candida albicans (strain SC5314 / ATCC MYA-2876)</name>
    <name type="common">Yeast</name>
    <dbReference type="NCBI Taxonomy" id="237561"/>
    <lineage>
        <taxon>Eukaryota</taxon>
        <taxon>Fungi</taxon>
        <taxon>Dikarya</taxon>
        <taxon>Ascomycota</taxon>
        <taxon>Saccharomycotina</taxon>
        <taxon>Pichiomycetes</taxon>
        <taxon>Debaryomycetaceae</taxon>
        <taxon>Candida/Lodderomyces clade</taxon>
        <taxon>Candida</taxon>
    </lineage>
</organism>
<keyword id="KW-0227">DNA damage</keyword>
<keyword id="KW-0234">DNA repair</keyword>
<keyword id="KW-0238">DNA-binding</keyword>
<keyword id="KW-1185">Reference proteome</keyword>
<comment type="function">
    <text evidence="1 2">dsDNA-binding component of a FANCM-MHF complex involved in DNA damage repair and genome maintenance (By similarity). FANCM-MHF promotes gene conversion at blocked replication forks, probably by reversal of the stalled fork (By similarity). Component of the kinetochore, a multiprotein complex that assembles on centromeric DNA and attaches chromosomes to spindle microtubules, mediating chromosome segregation and sister chromatid segregation during meiosis and mitosis. Component of the inner kinetochore constitutive centromere-associated network (CCAN), which serves as a structural platform for outer kinetochore assembly (By similarity).</text>
</comment>
<comment type="subunit">
    <text evidence="2">The MHF histone-fold complex is a heterotetramer of 2 MHF1-MHF2 heterodimers. Together with MPH1/FANCM, forms the FANCM-MHF complex. Component of the inner kinetochore constitutive centromere-associated network (CCAN).</text>
</comment>
<comment type="similarity">
    <text evidence="3">Belongs to the TAF9 family. CENP-S/MHF1 subfamily.</text>
</comment>
<sequence length="117" mass="13282">MVKQQSKEEIALQLKSAVYLSVAKIVEAKLEDLNNDNAATTTTESNNKNNNNNMLIATPTFIAQLVELVYNQLINLGEDLELFCQHANRDIVEPSDLFMVTRKNPTLQQHLKDLLRQ</sequence>
<reference key="1">
    <citation type="journal article" date="2004" name="Proc. Natl. Acad. Sci. U.S.A.">
        <title>The diploid genome sequence of Candida albicans.</title>
        <authorList>
            <person name="Jones T."/>
            <person name="Federspiel N.A."/>
            <person name="Chibana H."/>
            <person name="Dungan J."/>
            <person name="Kalman S."/>
            <person name="Magee B.B."/>
            <person name="Newport G."/>
            <person name="Thorstenson Y.R."/>
            <person name="Agabian N."/>
            <person name="Magee P.T."/>
            <person name="Davis R.W."/>
            <person name="Scherer S."/>
        </authorList>
    </citation>
    <scope>NUCLEOTIDE SEQUENCE [LARGE SCALE GENOMIC DNA]</scope>
    <source>
        <strain>SC5314 / ATCC MYA-2876</strain>
    </source>
</reference>
<reference key="2">
    <citation type="journal article" date="2007" name="Genome Biol.">
        <title>Assembly of the Candida albicans genome into sixteen supercontigs aligned on the eight chromosomes.</title>
        <authorList>
            <person name="van het Hoog M."/>
            <person name="Rast T.J."/>
            <person name="Martchenko M."/>
            <person name="Grindle S."/>
            <person name="Dignard D."/>
            <person name="Hogues H."/>
            <person name="Cuomo C."/>
            <person name="Berriman M."/>
            <person name="Scherer S."/>
            <person name="Magee B.B."/>
            <person name="Whiteway M."/>
            <person name="Chibana H."/>
            <person name="Nantel A."/>
            <person name="Magee P.T."/>
        </authorList>
    </citation>
    <scope>GENOME REANNOTATION</scope>
    <source>
        <strain>SC5314 / ATCC MYA-2876</strain>
    </source>
</reference>
<reference key="3">
    <citation type="journal article" date="2013" name="Genome Biol.">
        <title>Assembly of a phased diploid Candida albicans genome facilitates allele-specific measurements and provides a simple model for repeat and indel structure.</title>
        <authorList>
            <person name="Muzzey D."/>
            <person name="Schwartz K."/>
            <person name="Weissman J.S."/>
            <person name="Sherlock G."/>
        </authorList>
    </citation>
    <scope>NUCLEOTIDE SEQUENCE [LARGE SCALE GENOMIC DNA]</scope>
    <scope>GENOME REANNOTATION</scope>
    <source>
        <strain>SC5314 / ATCC MYA-2876</strain>
    </source>
</reference>
<gene>
    <name evidence="2" type="primary">MHF1</name>
    <name type="ordered locus">CAALFM_C112840WA</name>
    <name type="ORF">CaO19.12380</name>
    <name type="ORF">CaO19.4914</name>
</gene>
<proteinExistence type="inferred from homology"/>
<feature type="chain" id="PRO_0000424606" description="Inner kinetochore subunit MHF1">
    <location>
        <begin position="1"/>
        <end position="117"/>
    </location>
</feature>
<name>CENPS_CANAL</name>